<reference key="1">
    <citation type="journal article" date="1998" name="Nature">
        <title>The genome sequence of Rickettsia prowazekii and the origin of mitochondria.</title>
        <authorList>
            <person name="Andersson S.G.E."/>
            <person name="Zomorodipour A."/>
            <person name="Andersson J.O."/>
            <person name="Sicheritz-Ponten T."/>
            <person name="Alsmark U.C.M."/>
            <person name="Podowski R.M."/>
            <person name="Naeslund A.K."/>
            <person name="Eriksson A.-S."/>
            <person name="Winkler H.H."/>
            <person name="Kurland C.G."/>
        </authorList>
    </citation>
    <scope>NUCLEOTIDE SEQUENCE [LARGE SCALE GENOMIC DNA]</scope>
    <source>
        <strain>Madrid E</strain>
    </source>
</reference>
<protein>
    <recommendedName>
        <fullName>Putative tRNA pseudouridine synthase B</fullName>
        <ecNumber>5.4.99.25</ecNumber>
    </recommendedName>
    <alternativeName>
        <fullName>tRNA pseudouridine(55) synthase</fullName>
        <shortName>Psi55 synthase</shortName>
    </alternativeName>
    <alternativeName>
        <fullName>tRNA pseudouridylate synthase</fullName>
    </alternativeName>
    <alternativeName>
        <fullName>tRNA-uridine isomerase</fullName>
    </alternativeName>
</protein>
<proteinExistence type="uncertain"/>
<name>TRUB_RICPR</name>
<comment type="function">
    <text evidence="1">Responsible for synthesis of pseudouridine from uracil-55 in the psi GC loop of transfer RNAs.</text>
</comment>
<comment type="catalytic activity">
    <reaction>
        <text>uridine(55) in tRNA = pseudouridine(55) in tRNA</text>
        <dbReference type="Rhea" id="RHEA:42532"/>
        <dbReference type="Rhea" id="RHEA-COMP:10101"/>
        <dbReference type="Rhea" id="RHEA-COMP:10102"/>
        <dbReference type="ChEBI" id="CHEBI:65314"/>
        <dbReference type="ChEBI" id="CHEBI:65315"/>
        <dbReference type="EC" id="5.4.99.25"/>
    </reaction>
</comment>
<comment type="similarity">
    <text evidence="2">Belongs to the pseudouridine synthase TruB family. Type 1 subfamily.</text>
</comment>
<comment type="caution">
    <text evidence="2">Could be the product of a pseudogene. C-terminally truncated compared to other bacterial TruB.</text>
</comment>
<evidence type="ECO:0000250" key="1"/>
<evidence type="ECO:0000305" key="2"/>
<feature type="chain" id="PRO_0000121895" description="Putative tRNA pseudouridine synthase B">
    <location>
        <begin position="1"/>
        <end position="172"/>
    </location>
</feature>
<feature type="active site" description="Nucleophile" evidence="1">
    <location>
        <position position="39"/>
    </location>
</feature>
<dbReference type="EC" id="5.4.99.25"/>
<dbReference type="EMBL" id="AJ235272">
    <property type="protein sequence ID" value="CAA14953.1"/>
    <property type="molecule type" value="Genomic_DNA"/>
</dbReference>
<dbReference type="PIR" id="G71653">
    <property type="entry name" value="G71653"/>
</dbReference>
<dbReference type="RefSeq" id="NP_220877.1">
    <property type="nucleotide sequence ID" value="NC_000963.1"/>
</dbReference>
<dbReference type="SMR" id="Q9ZD46"/>
<dbReference type="STRING" id="272947.gene:17555581"/>
<dbReference type="EnsemblBacteria" id="CAA14953">
    <property type="protein sequence ID" value="CAA14953"/>
    <property type="gene ID" value="CAA14953"/>
</dbReference>
<dbReference type="KEGG" id="rpr:RP501"/>
<dbReference type="PATRIC" id="fig|272947.5.peg.510"/>
<dbReference type="eggNOG" id="COG0130">
    <property type="taxonomic scope" value="Bacteria"/>
</dbReference>
<dbReference type="HOGENOM" id="CLU_032087_2_2_5"/>
<dbReference type="OrthoDB" id="9802309at2"/>
<dbReference type="Proteomes" id="UP000002480">
    <property type="component" value="Chromosome"/>
</dbReference>
<dbReference type="GO" id="GO:0003723">
    <property type="term" value="F:RNA binding"/>
    <property type="evidence" value="ECO:0007669"/>
    <property type="project" value="InterPro"/>
</dbReference>
<dbReference type="GO" id="GO:0160148">
    <property type="term" value="F:tRNA pseudouridine(55) synthase activity"/>
    <property type="evidence" value="ECO:0007669"/>
    <property type="project" value="UniProtKB-EC"/>
</dbReference>
<dbReference type="GO" id="GO:1990481">
    <property type="term" value="P:mRNA pseudouridine synthesis"/>
    <property type="evidence" value="ECO:0007669"/>
    <property type="project" value="TreeGrafter"/>
</dbReference>
<dbReference type="GO" id="GO:0006400">
    <property type="term" value="P:tRNA modification"/>
    <property type="evidence" value="ECO:0007669"/>
    <property type="project" value="TreeGrafter"/>
</dbReference>
<dbReference type="Gene3D" id="3.30.2350.10">
    <property type="entry name" value="Pseudouridine synthase"/>
    <property type="match status" value="1"/>
</dbReference>
<dbReference type="InterPro" id="IPR020103">
    <property type="entry name" value="PsdUridine_synth_cat_dom_sf"/>
</dbReference>
<dbReference type="InterPro" id="IPR002501">
    <property type="entry name" value="PsdUridine_synth_N"/>
</dbReference>
<dbReference type="InterPro" id="IPR014780">
    <property type="entry name" value="tRNA_psdUridine_synth_TruB"/>
</dbReference>
<dbReference type="NCBIfam" id="TIGR00431">
    <property type="entry name" value="TruB"/>
    <property type="match status" value="1"/>
</dbReference>
<dbReference type="PANTHER" id="PTHR13767:SF2">
    <property type="entry name" value="PSEUDOURIDYLATE SYNTHASE TRUB1"/>
    <property type="match status" value="1"/>
</dbReference>
<dbReference type="PANTHER" id="PTHR13767">
    <property type="entry name" value="TRNA-PSEUDOURIDINE SYNTHASE"/>
    <property type="match status" value="1"/>
</dbReference>
<dbReference type="Pfam" id="PF01509">
    <property type="entry name" value="TruB_N"/>
    <property type="match status" value="1"/>
</dbReference>
<dbReference type="SUPFAM" id="SSF55120">
    <property type="entry name" value="Pseudouridine synthase"/>
    <property type="match status" value="1"/>
</dbReference>
<keyword id="KW-0413">Isomerase</keyword>
<keyword id="KW-1185">Reference proteome</keyword>
<keyword id="KW-0819">tRNA processing</keyword>
<gene>
    <name type="primary">truB</name>
    <name type="ordered locus">RP501</name>
</gene>
<sequence>MGNYWLNFYKPRGISSAKLVNIVKKIIGKTKIGHAGTLDVEAEGILPLAVGEATKLIQLLIDARKTYIFSVKFGTQTDSGDYTGKVIASKDYIPSQEEVYTVCSKFIGNIRQVPPIFSAIKVNGVRAYKLAREGKIVELKPRNITIYDLKCLNFDKENAIATYYTECSKGLI</sequence>
<organism>
    <name type="scientific">Rickettsia prowazekii (strain Madrid E)</name>
    <dbReference type="NCBI Taxonomy" id="272947"/>
    <lineage>
        <taxon>Bacteria</taxon>
        <taxon>Pseudomonadati</taxon>
        <taxon>Pseudomonadota</taxon>
        <taxon>Alphaproteobacteria</taxon>
        <taxon>Rickettsiales</taxon>
        <taxon>Rickettsiaceae</taxon>
        <taxon>Rickettsieae</taxon>
        <taxon>Rickettsia</taxon>
        <taxon>typhus group</taxon>
    </lineage>
</organism>
<accession>Q9ZD46</accession>